<organism>
    <name type="scientific">Pseudomonas aeruginosa (strain ATCC 15692 / DSM 22644 / CIP 104116 / JCM 14847 / LMG 12228 / 1C / PRS 101 / PAO1)</name>
    <dbReference type="NCBI Taxonomy" id="208964"/>
    <lineage>
        <taxon>Bacteria</taxon>
        <taxon>Pseudomonadati</taxon>
        <taxon>Pseudomonadota</taxon>
        <taxon>Gammaproteobacteria</taxon>
        <taxon>Pseudomonadales</taxon>
        <taxon>Pseudomonadaceae</taxon>
        <taxon>Pseudomonas</taxon>
    </lineage>
</organism>
<feature type="signal peptide" evidence="1">
    <location>
        <begin position="1"/>
        <end position="21"/>
    </location>
</feature>
<feature type="chain" id="PRO_0000018269" description="Outer-membrane lipoprotein carrier protein">
    <location>
        <begin position="22"/>
        <end position="208"/>
    </location>
</feature>
<feature type="helix" evidence="3">
    <location>
        <begin position="24"/>
        <end position="35"/>
    </location>
</feature>
<feature type="strand" evidence="3">
    <location>
        <begin position="38"/>
        <end position="49"/>
    </location>
</feature>
<feature type="strand" evidence="3">
    <location>
        <begin position="56"/>
        <end position="66"/>
    </location>
</feature>
<feature type="turn" evidence="3">
    <location>
        <begin position="67"/>
        <end position="69"/>
    </location>
</feature>
<feature type="strand" evidence="3">
    <location>
        <begin position="70"/>
        <end position="75"/>
    </location>
</feature>
<feature type="strand" evidence="3">
    <location>
        <begin position="77"/>
        <end position="79"/>
    </location>
</feature>
<feature type="strand" evidence="3">
    <location>
        <begin position="81"/>
        <end position="86"/>
    </location>
</feature>
<feature type="strand" evidence="3">
    <location>
        <begin position="89"/>
        <end position="94"/>
    </location>
</feature>
<feature type="turn" evidence="3">
    <location>
        <begin position="95"/>
        <end position="98"/>
    </location>
</feature>
<feature type="strand" evidence="3">
    <location>
        <begin position="99"/>
        <end position="103"/>
    </location>
</feature>
<feature type="helix" evidence="3">
    <location>
        <begin position="105"/>
        <end position="108"/>
    </location>
</feature>
<feature type="turn" evidence="3">
    <location>
        <begin position="109"/>
        <end position="111"/>
    </location>
</feature>
<feature type="helix" evidence="3">
    <location>
        <begin position="113"/>
        <end position="118"/>
    </location>
</feature>
<feature type="helix" evidence="3">
    <location>
        <begin position="121"/>
        <end position="124"/>
    </location>
</feature>
<feature type="turn" evidence="3">
    <location>
        <begin position="125"/>
        <end position="127"/>
    </location>
</feature>
<feature type="strand" evidence="3">
    <location>
        <begin position="128"/>
        <end position="135"/>
    </location>
</feature>
<feature type="strand" evidence="3">
    <location>
        <begin position="138"/>
        <end position="148"/>
    </location>
</feature>
<feature type="strand" evidence="3">
    <location>
        <begin position="153"/>
        <end position="160"/>
    </location>
</feature>
<feature type="strand" evidence="3">
    <location>
        <begin position="163"/>
        <end position="170"/>
    </location>
</feature>
<feature type="strand" evidence="3">
    <location>
        <begin position="176"/>
        <end position="187"/>
    </location>
</feature>
<feature type="helix" evidence="3">
    <location>
        <begin position="192"/>
        <end position="195"/>
    </location>
</feature>
<feature type="strand" evidence="3">
    <location>
        <begin position="204"/>
        <end position="206"/>
    </location>
</feature>
<name>LOLA_PSEAE</name>
<comment type="function">
    <text evidence="1 2">Participates in the translocation of lipoproteins from the inner membrane to the outer membrane. Only forms a complex with a lipoprotein if the residue after the N-terminal Cys is not an aspartate (The Asp acts as a targeting signal to indicate that the lipoprotein should stay in the inner membrane) (By similarity). Important for cell envelope stability and growth (PubMed:26621210).</text>
</comment>
<comment type="subunit">
    <text evidence="1">Monomer.</text>
</comment>
<comment type="subcellular location">
    <subcellularLocation>
        <location evidence="1">Periplasm</location>
    </subcellularLocation>
</comment>
<comment type="disruption phenotype">
    <text evidence="2">Essential, it cannot be deleted (PubMed:26621210). LolA depletion affects cell envelope stability, and decreases the ability to cause infection in a G.mellonella model of infection and in a mouse model of pulmonary infection (PubMed:26621210).</text>
</comment>
<comment type="similarity">
    <text evidence="1">Belongs to the LolA family.</text>
</comment>
<evidence type="ECO:0000255" key="1">
    <source>
        <dbReference type="HAMAP-Rule" id="MF_00240"/>
    </source>
</evidence>
<evidence type="ECO:0000269" key="2">
    <source>
    </source>
</evidence>
<evidence type="ECO:0007829" key="3">
    <source>
        <dbReference type="PDB" id="2W7Q"/>
    </source>
</evidence>
<accession>Q9I0M4</accession>
<protein>
    <recommendedName>
        <fullName evidence="1">Outer-membrane lipoprotein carrier protein</fullName>
    </recommendedName>
</protein>
<keyword id="KW-0002">3D-structure</keyword>
<keyword id="KW-0143">Chaperone</keyword>
<keyword id="KW-0574">Periplasm</keyword>
<keyword id="KW-0653">Protein transport</keyword>
<keyword id="KW-1185">Reference proteome</keyword>
<keyword id="KW-0732">Signal</keyword>
<keyword id="KW-0813">Transport</keyword>
<sequence>MRLIRTLFVAALAMGASLAHADDSAAVQRLTGLLNKAQTLTARFSQLTLDGSGTRLQETAGQLSLKRPGLFRWHTDAPNEQLLISNGEKVWLYDPDLEQVTIQKLDQRLTQTPALLLSGDISKISESFAITYKEGGNVVDFVLKPKTKDTLFDTLRLSFRSGKVNDMQMIDGVGQRTNILFFDVKMNEALDAKQFTFDVPPGVDVIQE</sequence>
<dbReference type="EMBL" id="AE004091">
    <property type="protein sequence ID" value="AAG06002.1"/>
    <property type="molecule type" value="Genomic_DNA"/>
</dbReference>
<dbReference type="PIR" id="D83318">
    <property type="entry name" value="D83318"/>
</dbReference>
<dbReference type="RefSeq" id="NP_251304.1">
    <property type="nucleotide sequence ID" value="NC_002516.2"/>
</dbReference>
<dbReference type="RefSeq" id="WP_003090414.1">
    <property type="nucleotide sequence ID" value="NZ_QZGE01000008.1"/>
</dbReference>
<dbReference type="PDB" id="2W7Q">
    <property type="method" value="X-ray"/>
    <property type="resolution" value="1.88 A"/>
    <property type="chains" value="A/B=22-208"/>
</dbReference>
<dbReference type="PDBsum" id="2W7Q"/>
<dbReference type="SMR" id="Q9I0M4"/>
<dbReference type="FunCoup" id="Q9I0M4">
    <property type="interactions" value="137"/>
</dbReference>
<dbReference type="STRING" id="208964.PA2614"/>
<dbReference type="PaxDb" id="208964-PA2614"/>
<dbReference type="DNASU" id="882320"/>
<dbReference type="GeneID" id="77220849"/>
<dbReference type="GeneID" id="882320"/>
<dbReference type="KEGG" id="pae:PA2614"/>
<dbReference type="PATRIC" id="fig|208964.12.peg.2735"/>
<dbReference type="PseudoCAP" id="PA2614"/>
<dbReference type="HOGENOM" id="CLU_087560_0_0_6"/>
<dbReference type="InParanoid" id="Q9I0M4"/>
<dbReference type="OrthoDB" id="9787361at2"/>
<dbReference type="PhylomeDB" id="Q9I0M4"/>
<dbReference type="BioCyc" id="PAER208964:G1FZ6-2654-MONOMER"/>
<dbReference type="EvolutionaryTrace" id="Q9I0M4"/>
<dbReference type="Proteomes" id="UP000002438">
    <property type="component" value="Chromosome"/>
</dbReference>
<dbReference type="GO" id="GO:0030288">
    <property type="term" value="C:outer membrane-bounded periplasmic space"/>
    <property type="evidence" value="ECO:0000318"/>
    <property type="project" value="GO_Central"/>
</dbReference>
<dbReference type="GO" id="GO:0044874">
    <property type="term" value="P:lipoprotein localization to outer membrane"/>
    <property type="evidence" value="ECO:0000314"/>
    <property type="project" value="CACAO"/>
</dbReference>
<dbReference type="GO" id="GO:0042953">
    <property type="term" value="P:lipoprotein transport"/>
    <property type="evidence" value="ECO:0000318"/>
    <property type="project" value="GO_Central"/>
</dbReference>
<dbReference type="CDD" id="cd16325">
    <property type="entry name" value="LolA"/>
    <property type="match status" value="1"/>
</dbReference>
<dbReference type="FunFam" id="2.50.20.10:FF:000007">
    <property type="entry name" value="Outer-membrane lipoprotein carrier protein"/>
    <property type="match status" value="1"/>
</dbReference>
<dbReference type="Gene3D" id="2.50.20.10">
    <property type="entry name" value="Lipoprotein localisation LolA/LolB/LppX"/>
    <property type="match status" value="1"/>
</dbReference>
<dbReference type="HAMAP" id="MF_00240">
    <property type="entry name" value="LolA"/>
    <property type="match status" value="1"/>
</dbReference>
<dbReference type="InterPro" id="IPR029046">
    <property type="entry name" value="LolA/LolB/LppX"/>
</dbReference>
<dbReference type="InterPro" id="IPR004564">
    <property type="entry name" value="OM_lipoprot_carrier_LolA-like"/>
</dbReference>
<dbReference type="InterPro" id="IPR018323">
    <property type="entry name" value="OM_lipoprot_carrier_LolA_Pbac"/>
</dbReference>
<dbReference type="NCBIfam" id="TIGR00547">
    <property type="entry name" value="lolA"/>
    <property type="match status" value="1"/>
</dbReference>
<dbReference type="PANTHER" id="PTHR35869">
    <property type="entry name" value="OUTER-MEMBRANE LIPOPROTEIN CARRIER PROTEIN"/>
    <property type="match status" value="1"/>
</dbReference>
<dbReference type="PANTHER" id="PTHR35869:SF1">
    <property type="entry name" value="OUTER-MEMBRANE LIPOPROTEIN CARRIER PROTEIN"/>
    <property type="match status" value="1"/>
</dbReference>
<dbReference type="Pfam" id="PF03548">
    <property type="entry name" value="LolA"/>
    <property type="match status" value="1"/>
</dbReference>
<dbReference type="SUPFAM" id="SSF89392">
    <property type="entry name" value="Prokaryotic lipoproteins and lipoprotein localization factors"/>
    <property type="match status" value="1"/>
</dbReference>
<proteinExistence type="evidence at protein level"/>
<gene>
    <name evidence="1" type="primary">lolA</name>
    <name type="ordered locus">PA2614</name>
</gene>
<reference key="1">
    <citation type="journal article" date="2000" name="Nature">
        <title>Complete genome sequence of Pseudomonas aeruginosa PAO1, an opportunistic pathogen.</title>
        <authorList>
            <person name="Stover C.K."/>
            <person name="Pham X.-Q.T."/>
            <person name="Erwin A.L."/>
            <person name="Mizoguchi S.D."/>
            <person name="Warrener P."/>
            <person name="Hickey M.J."/>
            <person name="Brinkman F.S.L."/>
            <person name="Hufnagle W.O."/>
            <person name="Kowalik D.J."/>
            <person name="Lagrou M."/>
            <person name="Garber R.L."/>
            <person name="Goltry L."/>
            <person name="Tolentino E."/>
            <person name="Westbrock-Wadman S."/>
            <person name="Yuan Y."/>
            <person name="Brody L.L."/>
            <person name="Coulter S.N."/>
            <person name="Folger K.R."/>
            <person name="Kas A."/>
            <person name="Larbig K."/>
            <person name="Lim R.M."/>
            <person name="Smith K.A."/>
            <person name="Spencer D.H."/>
            <person name="Wong G.K.-S."/>
            <person name="Wu Z."/>
            <person name="Paulsen I.T."/>
            <person name="Reizer J."/>
            <person name="Saier M.H. Jr."/>
            <person name="Hancock R.E.W."/>
            <person name="Lory S."/>
            <person name="Olson M.V."/>
        </authorList>
    </citation>
    <scope>NUCLEOTIDE SEQUENCE [LARGE SCALE GENOMIC DNA]</scope>
    <source>
        <strain>ATCC 15692 / DSM 22644 / CIP 104116 / JCM 14847 / LMG 12228 / 1C / PRS 101 / PAO1</strain>
    </source>
</reference>
<reference key="2">
    <citation type="journal article" date="2015" name="Sci. Rep.">
        <title>In vitro and in vivo screening for novel essential cell-envelope proteins in Pseudomonas aeruginosa.</title>
        <authorList>
            <person name="Fernandez-Pinar R."/>
            <person name="Lo Sciuto A."/>
            <person name="Rossi A."/>
            <person name="Ranucci S."/>
            <person name="Bragonzi A."/>
            <person name="Imperi F."/>
        </authorList>
    </citation>
    <scope>FUNCTION</scope>
    <scope>DISRUPTION PHENOTYPE</scope>
    <source>
        <strain>ATCC 15692 / DSM 22644 / CIP 104116 / JCM 14847 / LMG 12228 / 1C / PRS 101 / PAO1</strain>
    </source>
</reference>